<name>E2F2_DROME</name>
<comment type="function">
    <text evidence="3 4 5 6 7 8 10 11 12 13">Transcriptional repressor that binds to E2f sites and represses E2f-regulated target genes. Binding to E2f sites requires transcription factor Dp. Acts synergistically with Rbf2 to antagonize E2f1-mediated transcriptional activation. Component of the DREAM complex, a multiprotein complex that can both act as a transcription activator or repressor depending on the context. The DREAM complex is required for recruiting E2f2 at differentiation-specific promoters and for stabilizing E2f2-Rbf complexes during S phase. During development, the complex represses transcription of developmentally controlled E2f target genes. During oogenesis, plays a role in restricting DNA synthesis to sites of chorion gene amplification in late stage ovarian follicle cells. Plays an inhibitory role in ionizing radiation (IR)-induced p53-independent apoptosis. May be involved in cell cycle exit by temporarily limiting CycE-dependent activation of E2f-regulated transcription.</text>
</comment>
<comment type="subunit">
    <text evidence="3 4 5 8 9">Forms a heterodimer with Dp. Interacts with Rbf/Rbf1 and Rbf2. Component of the DREAM complex, which is at least composed of Myb, Caf1-55, mip40, mip120, mip130, E2f2, Dp, Rbf, Rbf2, lin-52, HDAC1/Rpd3 and l(3)mbt.</text>
</comment>
<comment type="interaction">
    <interactant intactId="EBI-93258">
        <id>O77051</id>
    </interactant>
    <interactant intactId="EBI-75943">
        <id>Q9W542</id>
        <label>mip130</label>
    </interactant>
    <organismsDiffer>false</organismsDiffer>
    <experiments>4</experiments>
</comment>
<comment type="subcellular location">
    <subcellularLocation>
        <location evidence="17">Nucleus</location>
    </subcellularLocation>
</comment>
<comment type="tissue specificity">
    <text evidence="3">Ubiquitously expressed in eye disk.</text>
</comment>
<comment type="developmental stage">
    <text evidence="4 13">Expressed throughout embryonic development, with highest levels detected in cycling cells including in mitotically active cells during germ-band extended stages, as well as proliferating cells of the CNS and endoreduplicating cells of tissues such as the midgut at later embryonic stages. Maternal mRNA detected in syncytial stage embryos and disappears by the cellular blastoderm stage. A single transcript of 1.4 kb is detected at the highest level in 4 to 8 hour embryos, and at a relatively high level in 0 to 2 hour embryos. Lower levels of the transcript are detected in unfertilized eggs, larvae, pupae and adult.</text>
</comment>
<comment type="disruption phenotype">
    <text evidence="3 4 6 11">Flies show reduced viability, with between 20 to 35% surviving until adult stages and both male and female flies showing significantly reduced fertility (PubMed:11511545). E2f1 and E2f2 double mutants die at the pupal stage during development compared with E2f1 mutants that die earlier at the larval stage, indicating that E2f1 and E2f2 functionally antagonize each other in vivo. According to PubMed:11748144, flies are viable, with males that are fully fertile and females that are partially sterile. p53 and E2f2 double mutants exhibit substantially more apoptosis at 20 and 24 hours after exposure to IR as compared to p53 single mutants, indicating that E2f2 limits IR-induced p53-independent apoptosis.</text>
</comment>
<comment type="similarity">
    <text evidence="1">Belongs to the E2F/DP family.</text>
</comment>
<dbReference type="EMBL" id="AB016824">
    <property type="protein sequence ID" value="BAA33742.1"/>
    <property type="molecule type" value="mRNA"/>
</dbReference>
<dbReference type="EMBL" id="AA202711">
    <property type="status" value="NOT_ANNOTATED_CDS"/>
    <property type="molecule type" value="mRNA"/>
</dbReference>
<dbReference type="EMBL" id="AE014134">
    <property type="protein sequence ID" value="AAF53965.1"/>
    <property type="molecule type" value="Genomic_DNA"/>
</dbReference>
<dbReference type="EMBL" id="AY069118">
    <property type="protein sequence ID" value="AAL39263.1"/>
    <property type="molecule type" value="mRNA"/>
</dbReference>
<dbReference type="PIR" id="JE0342">
    <property type="entry name" value="JE0342"/>
</dbReference>
<dbReference type="RefSeq" id="NP_001286115.1">
    <property type="nucleotide sequence ID" value="NM_001299186.1"/>
</dbReference>
<dbReference type="RefSeq" id="NP_477355.1">
    <property type="nucleotide sequence ID" value="NM_058007.5"/>
</dbReference>
<dbReference type="SMR" id="O77051"/>
<dbReference type="BioGRID" id="61336">
    <property type="interactions" value="82"/>
</dbReference>
<dbReference type="ComplexPortal" id="CPX-2374">
    <property type="entry name" value="drEAM transcriptional repressor complex, Rbf variant"/>
</dbReference>
<dbReference type="ComplexPortal" id="CPX-2376">
    <property type="entry name" value="drEAM transcriptional repressor complex, Rbf2 variant"/>
</dbReference>
<dbReference type="DIP" id="DIP-18289N"/>
<dbReference type="FunCoup" id="O77051">
    <property type="interactions" value="1571"/>
</dbReference>
<dbReference type="IntAct" id="O77051">
    <property type="interactions" value="46"/>
</dbReference>
<dbReference type="STRING" id="7227.FBpp0312101"/>
<dbReference type="PaxDb" id="7227-FBpp0081029"/>
<dbReference type="EnsemblMetazoa" id="FBtr0081501">
    <property type="protein sequence ID" value="FBpp0081029"/>
    <property type="gene ID" value="FBgn0024371"/>
</dbReference>
<dbReference type="EnsemblMetazoa" id="FBtr0346451">
    <property type="protein sequence ID" value="FBpp0312101"/>
    <property type="gene ID" value="FBgn0024371"/>
</dbReference>
<dbReference type="GeneID" id="35381"/>
<dbReference type="KEGG" id="dme:Dmel_CG1071"/>
<dbReference type="UCSC" id="CG1071-RA">
    <property type="organism name" value="d. melanogaster"/>
</dbReference>
<dbReference type="AGR" id="FB:FBgn0024371"/>
<dbReference type="CTD" id="1870"/>
<dbReference type="FlyBase" id="FBgn0024371">
    <property type="gene designation" value="E2f2"/>
</dbReference>
<dbReference type="VEuPathDB" id="VectorBase:FBgn0024371"/>
<dbReference type="eggNOG" id="KOG2577">
    <property type="taxonomic scope" value="Eukaryota"/>
</dbReference>
<dbReference type="HOGENOM" id="CLU_750673_0_0_1"/>
<dbReference type="InParanoid" id="O77051"/>
<dbReference type="OMA" id="FQNYMAG"/>
<dbReference type="OrthoDB" id="1743261at2759"/>
<dbReference type="PhylomeDB" id="O77051"/>
<dbReference type="Reactome" id="R-DME-1538133">
    <property type="pathway name" value="G0 and Early G1"/>
</dbReference>
<dbReference type="Reactome" id="R-DME-2173796">
    <property type="pathway name" value="SMAD2/SMAD3:SMAD4 heterotrimer regulates transcription"/>
</dbReference>
<dbReference type="Reactome" id="R-DME-69231">
    <property type="pathway name" value="Cyclin D associated events in G1"/>
</dbReference>
<dbReference type="SignaLink" id="O77051"/>
<dbReference type="BioGRID-ORCS" id="35381">
    <property type="hits" value="1 hit in 3 CRISPR screens"/>
</dbReference>
<dbReference type="GenomeRNAi" id="35381"/>
<dbReference type="PRO" id="PR:O77051"/>
<dbReference type="Proteomes" id="UP000000803">
    <property type="component" value="Chromosome 2L"/>
</dbReference>
<dbReference type="Bgee" id="FBgn0024371">
    <property type="expression patterns" value="Expressed in secondary oocyte and 109 other cell types or tissues"/>
</dbReference>
<dbReference type="ExpressionAtlas" id="O77051">
    <property type="expression patterns" value="baseline and differential"/>
</dbReference>
<dbReference type="GO" id="GO:0000785">
    <property type="term" value="C:chromatin"/>
    <property type="evidence" value="ECO:0000314"/>
    <property type="project" value="FlyBase"/>
</dbReference>
<dbReference type="GO" id="GO:0070176">
    <property type="term" value="C:DRM complex"/>
    <property type="evidence" value="ECO:0000314"/>
    <property type="project" value="FlyBase"/>
</dbReference>
<dbReference type="GO" id="GO:0031523">
    <property type="term" value="C:Myb complex"/>
    <property type="evidence" value="ECO:0000314"/>
    <property type="project" value="FlyBase"/>
</dbReference>
<dbReference type="GO" id="GO:0005634">
    <property type="term" value="C:nucleus"/>
    <property type="evidence" value="ECO:0000314"/>
    <property type="project" value="FlyBase"/>
</dbReference>
<dbReference type="GO" id="GO:0035189">
    <property type="term" value="C:Rb-E2F complex"/>
    <property type="evidence" value="ECO:0000314"/>
    <property type="project" value="FlyBase"/>
</dbReference>
<dbReference type="GO" id="GO:0090575">
    <property type="term" value="C:RNA polymerase II transcription regulator complex"/>
    <property type="evidence" value="ECO:0000318"/>
    <property type="project" value="GO_Central"/>
</dbReference>
<dbReference type="GO" id="GO:0000981">
    <property type="term" value="F:DNA-binding transcription factor activity, RNA polymerase II-specific"/>
    <property type="evidence" value="ECO:0000318"/>
    <property type="project" value="GO_Central"/>
</dbReference>
<dbReference type="GO" id="GO:0000978">
    <property type="term" value="F:RNA polymerase II cis-regulatory region sequence-specific DNA binding"/>
    <property type="evidence" value="ECO:0000318"/>
    <property type="project" value="GO_Central"/>
</dbReference>
<dbReference type="GO" id="GO:0000977">
    <property type="term" value="F:RNA polymerase II transcription regulatory region sequence-specific DNA binding"/>
    <property type="evidence" value="ECO:0000314"/>
    <property type="project" value="FlyBase"/>
</dbReference>
<dbReference type="GO" id="GO:0042023">
    <property type="term" value="P:DNA endoreduplication"/>
    <property type="evidence" value="ECO:0000315"/>
    <property type="project" value="FlyBase"/>
</dbReference>
<dbReference type="GO" id="GO:0007113">
    <property type="term" value="P:endomitotic cell cycle"/>
    <property type="evidence" value="ECO:0000304"/>
    <property type="project" value="FlyBase"/>
</dbReference>
<dbReference type="GO" id="GO:0000082">
    <property type="term" value="P:G1/S transition of mitotic cell cycle"/>
    <property type="evidence" value="ECO:0000304"/>
    <property type="project" value="FlyBase"/>
</dbReference>
<dbReference type="GO" id="GO:0007444">
    <property type="term" value="P:imaginal disc development"/>
    <property type="evidence" value="ECO:0000304"/>
    <property type="project" value="FlyBase"/>
</dbReference>
<dbReference type="GO" id="GO:0043066">
    <property type="term" value="P:negative regulation of apoptotic process"/>
    <property type="evidence" value="ECO:0000314"/>
    <property type="project" value="UniProtKB"/>
</dbReference>
<dbReference type="GO" id="GO:0008156">
    <property type="term" value="P:negative regulation of DNA replication"/>
    <property type="evidence" value="ECO:0000315"/>
    <property type="project" value="FlyBase"/>
</dbReference>
<dbReference type="GO" id="GO:0045892">
    <property type="term" value="P:negative regulation of DNA-templated transcription"/>
    <property type="evidence" value="ECO:0000314"/>
    <property type="project" value="UniProtKB"/>
</dbReference>
<dbReference type="GO" id="GO:2000134">
    <property type="term" value="P:negative regulation of G1/S transition of mitotic cell cycle"/>
    <property type="evidence" value="ECO:0000314"/>
    <property type="project" value="FlyBase"/>
</dbReference>
<dbReference type="GO" id="GO:0000122">
    <property type="term" value="P:negative regulation of transcription by RNA polymerase II"/>
    <property type="evidence" value="ECO:0000315"/>
    <property type="project" value="FlyBase"/>
</dbReference>
<dbReference type="GO" id="GO:0048477">
    <property type="term" value="P:oogenesis"/>
    <property type="evidence" value="ECO:0000304"/>
    <property type="project" value="FlyBase"/>
</dbReference>
<dbReference type="GO" id="GO:0006357">
    <property type="term" value="P:regulation of transcription by RNA polymerase II"/>
    <property type="evidence" value="ECO:0000318"/>
    <property type="project" value="GO_Central"/>
</dbReference>
<dbReference type="FunFam" id="1.10.10.10:FF:000458">
    <property type="entry name" value="E2F-like (Mammalian transcription factor)"/>
    <property type="match status" value="1"/>
</dbReference>
<dbReference type="Gene3D" id="6.10.250.540">
    <property type="match status" value="1"/>
</dbReference>
<dbReference type="Gene3D" id="1.10.10.10">
    <property type="entry name" value="Winged helix-like DNA-binding domain superfamily/Winged helix DNA-binding domain"/>
    <property type="match status" value="1"/>
</dbReference>
<dbReference type="InterPro" id="IPR015633">
    <property type="entry name" value="E2F"/>
</dbReference>
<dbReference type="InterPro" id="IPR037241">
    <property type="entry name" value="E2F-DP_heterodim"/>
</dbReference>
<dbReference type="InterPro" id="IPR003316">
    <property type="entry name" value="E2F_WHTH_DNA-bd_dom"/>
</dbReference>
<dbReference type="InterPro" id="IPR036388">
    <property type="entry name" value="WH-like_DNA-bd_sf"/>
</dbReference>
<dbReference type="InterPro" id="IPR036390">
    <property type="entry name" value="WH_DNA-bd_sf"/>
</dbReference>
<dbReference type="PANTHER" id="PTHR12081">
    <property type="entry name" value="TRANSCRIPTION FACTOR E2F"/>
    <property type="match status" value="1"/>
</dbReference>
<dbReference type="PANTHER" id="PTHR12081:SF18">
    <property type="entry name" value="TRANSCRIPTION FACTOR E2F2-RELATED"/>
    <property type="match status" value="1"/>
</dbReference>
<dbReference type="Pfam" id="PF02319">
    <property type="entry name" value="E2F_TDP"/>
    <property type="match status" value="1"/>
</dbReference>
<dbReference type="SMART" id="SM01372">
    <property type="entry name" value="E2F_TDP"/>
    <property type="match status" value="1"/>
</dbReference>
<dbReference type="SUPFAM" id="SSF144074">
    <property type="entry name" value="E2F-DP heterodimerization region"/>
    <property type="match status" value="1"/>
</dbReference>
<dbReference type="SUPFAM" id="SSF46785">
    <property type="entry name" value="Winged helix' DNA-binding domain"/>
    <property type="match status" value="1"/>
</dbReference>
<sequence length="370" mass="41395">MYKRKTASIVKRDSSAAGTTSSAMMMKVDSAETSVRSQSYESTPVSMDTSPDPPTPIKSPSNSQSQSQPGQQRSVGSLVLLTQKFVDLVKANEGSIDLKAATKILDVQKRRIYDITNVLEGIGLIDKGRHCSLVRWRGGGFNNAKDQENYDLARSRTNHLKMLEDDLDRQLEYAQRNLRYVMQDPSNRSYAYVTRDDLLDIFGDDSVFTIPNYDEEVDIKRNHYELAVSLDNGSAIDIRLVTNQGKSTTNPHDVDGFFDYHRLDTPSPSTSSHSSEDGNAPACAGNVITDEHGYSCNPGMKDEMKLLENELTAKIIFQNYLSGHSLRRFYPDDPNLENPPLLQLNPPQEDFNFALKSDEGICELFDVQCS</sequence>
<evidence type="ECO:0000255" key="1"/>
<evidence type="ECO:0000256" key="2">
    <source>
        <dbReference type="SAM" id="MobiDB-lite"/>
    </source>
</evidence>
<evidence type="ECO:0000269" key="3">
    <source>
    </source>
</evidence>
<evidence type="ECO:0000269" key="4">
    <source>
    </source>
</evidence>
<evidence type="ECO:0000269" key="5">
    <source>
    </source>
</evidence>
<evidence type="ECO:0000269" key="6">
    <source>
    </source>
</evidence>
<evidence type="ECO:0000269" key="7">
    <source>
    </source>
</evidence>
<evidence type="ECO:0000269" key="8">
    <source>
    </source>
</evidence>
<evidence type="ECO:0000269" key="9">
    <source>
    </source>
</evidence>
<evidence type="ECO:0000269" key="10">
    <source>
    </source>
</evidence>
<evidence type="ECO:0000269" key="11">
    <source>
    </source>
</evidence>
<evidence type="ECO:0000269" key="12">
    <source>
    </source>
</evidence>
<evidence type="ECO:0000269" key="13">
    <source>
    </source>
</evidence>
<evidence type="ECO:0000269" key="14">
    <source ref="2"/>
</evidence>
<evidence type="ECO:0000303" key="15">
    <source>
    </source>
</evidence>
<evidence type="ECO:0000305" key="16"/>
<evidence type="ECO:0000305" key="17">
    <source>
    </source>
</evidence>
<evidence type="ECO:0000312" key="18">
    <source>
        <dbReference type="EMBL" id="AAF53965.1"/>
    </source>
</evidence>
<evidence type="ECO:0000312" key="19">
    <source>
        <dbReference type="EMBL" id="AAL39263.1"/>
    </source>
</evidence>
<evidence type="ECO:0000312" key="20">
    <source>
        <dbReference type="EMBL" id="BAA33742.1"/>
    </source>
</evidence>
<proteinExistence type="evidence at protein level"/>
<feature type="chain" id="PRO_0000420434" description="Transcription factor E2F2">
    <location>
        <begin position="1"/>
        <end position="370"/>
    </location>
</feature>
<feature type="DNA-binding region" evidence="1 16">
    <location>
        <begin position="72"/>
        <end position="137"/>
    </location>
</feature>
<feature type="region of interest" description="Disordered" evidence="2">
    <location>
        <begin position="1"/>
        <end position="73"/>
    </location>
</feature>
<feature type="region of interest" description="Dimerization" evidence="1 16">
    <location>
        <begin position="137"/>
        <end position="226"/>
    </location>
</feature>
<feature type="compositionally biased region" description="Low complexity" evidence="2">
    <location>
        <begin position="15"/>
        <end position="26"/>
    </location>
</feature>
<feature type="compositionally biased region" description="Polar residues" evidence="2">
    <location>
        <begin position="31"/>
        <end position="49"/>
    </location>
</feature>
<feature type="compositionally biased region" description="Low complexity" evidence="2">
    <location>
        <begin position="59"/>
        <end position="73"/>
    </location>
</feature>
<keyword id="KW-0238">DNA-binding</keyword>
<keyword id="KW-0539">Nucleus</keyword>
<keyword id="KW-1185">Reference proteome</keyword>
<keyword id="KW-0678">Repressor</keyword>
<keyword id="KW-0804">Transcription</keyword>
<keyword id="KW-0805">Transcription regulation</keyword>
<reference evidence="16 20" key="1">
    <citation type="journal article" date="1998" name="Biochem. Biophys. Res. Commun.">
        <title>dE2F2, a novel E2F-family transcription factor in Drosophila melanogaster.</title>
        <authorList>
            <person name="Sawado T."/>
            <person name="Yamaguchi M."/>
            <person name="Nishimoto Y."/>
            <person name="Ohno K."/>
            <person name="Sakaguchi K."/>
            <person name="Matsukage A."/>
        </authorList>
    </citation>
    <scope>NUCLEOTIDE SEQUENCE [MRNA]</scope>
    <scope>FUNCTION</scope>
    <scope>DEVELOPMENTAL STAGE</scope>
    <scope>SUBCELLULAR LOCATION</scope>
</reference>
<reference evidence="16 19" key="2">
    <citation type="submission" date="1997-01" db="EMBL/GenBank/DDBJ databases">
        <title>BDGP/HHMI Drosophila EST Project.</title>
        <authorList>
            <person name="Harvey D."/>
            <person name="Hong L."/>
            <person name="Evans-Holm M."/>
            <person name="Pendleton J."/>
            <person name="Su C."/>
            <person name="Brokstein P."/>
            <person name="Lewis S."/>
            <person name="Rubin G.M."/>
        </authorList>
    </citation>
    <scope>NUCLEOTIDE SEQUENCE [LARGE SCALE MRNA]</scope>
    <source>
        <tissue evidence="14">Embryo</tissue>
    </source>
</reference>
<reference key="3">
    <citation type="journal article" date="2000" name="Science">
        <title>The genome sequence of Drosophila melanogaster.</title>
        <authorList>
            <person name="Adams M.D."/>
            <person name="Celniker S.E."/>
            <person name="Holt R.A."/>
            <person name="Evans C.A."/>
            <person name="Gocayne J.D."/>
            <person name="Amanatides P.G."/>
            <person name="Scherer S.E."/>
            <person name="Li P.W."/>
            <person name="Hoskins R.A."/>
            <person name="Galle R.F."/>
            <person name="George R.A."/>
            <person name="Lewis S.E."/>
            <person name="Richards S."/>
            <person name="Ashburner M."/>
            <person name="Henderson S.N."/>
            <person name="Sutton G.G."/>
            <person name="Wortman J.R."/>
            <person name="Yandell M.D."/>
            <person name="Zhang Q."/>
            <person name="Chen L.X."/>
            <person name="Brandon R.C."/>
            <person name="Rogers Y.-H.C."/>
            <person name="Blazej R.G."/>
            <person name="Champe M."/>
            <person name="Pfeiffer B.D."/>
            <person name="Wan K.H."/>
            <person name="Doyle C."/>
            <person name="Baxter E.G."/>
            <person name="Helt G."/>
            <person name="Nelson C.R."/>
            <person name="Miklos G.L.G."/>
            <person name="Abril J.F."/>
            <person name="Agbayani A."/>
            <person name="An H.-J."/>
            <person name="Andrews-Pfannkoch C."/>
            <person name="Baldwin D."/>
            <person name="Ballew R.M."/>
            <person name="Basu A."/>
            <person name="Baxendale J."/>
            <person name="Bayraktaroglu L."/>
            <person name="Beasley E.M."/>
            <person name="Beeson K.Y."/>
            <person name="Benos P.V."/>
            <person name="Berman B.P."/>
            <person name="Bhandari D."/>
            <person name="Bolshakov S."/>
            <person name="Borkova D."/>
            <person name="Botchan M.R."/>
            <person name="Bouck J."/>
            <person name="Brokstein P."/>
            <person name="Brottier P."/>
            <person name="Burtis K.C."/>
            <person name="Busam D.A."/>
            <person name="Butler H."/>
            <person name="Cadieu E."/>
            <person name="Center A."/>
            <person name="Chandra I."/>
            <person name="Cherry J.M."/>
            <person name="Cawley S."/>
            <person name="Dahlke C."/>
            <person name="Davenport L.B."/>
            <person name="Davies P."/>
            <person name="de Pablos B."/>
            <person name="Delcher A."/>
            <person name="Deng Z."/>
            <person name="Mays A.D."/>
            <person name="Dew I."/>
            <person name="Dietz S.M."/>
            <person name="Dodson K."/>
            <person name="Doup L.E."/>
            <person name="Downes M."/>
            <person name="Dugan-Rocha S."/>
            <person name="Dunkov B.C."/>
            <person name="Dunn P."/>
            <person name="Durbin K.J."/>
            <person name="Evangelista C.C."/>
            <person name="Ferraz C."/>
            <person name="Ferriera S."/>
            <person name="Fleischmann W."/>
            <person name="Fosler C."/>
            <person name="Gabrielian A.E."/>
            <person name="Garg N.S."/>
            <person name="Gelbart W.M."/>
            <person name="Glasser K."/>
            <person name="Glodek A."/>
            <person name="Gong F."/>
            <person name="Gorrell J.H."/>
            <person name="Gu Z."/>
            <person name="Guan P."/>
            <person name="Harris M."/>
            <person name="Harris N.L."/>
            <person name="Harvey D.A."/>
            <person name="Heiman T.J."/>
            <person name="Hernandez J.R."/>
            <person name="Houck J."/>
            <person name="Hostin D."/>
            <person name="Houston K.A."/>
            <person name="Howland T.J."/>
            <person name="Wei M.-H."/>
            <person name="Ibegwam C."/>
            <person name="Jalali M."/>
            <person name="Kalush F."/>
            <person name="Karpen G.H."/>
            <person name="Ke Z."/>
            <person name="Kennison J.A."/>
            <person name="Ketchum K.A."/>
            <person name="Kimmel B.E."/>
            <person name="Kodira C.D."/>
            <person name="Kraft C.L."/>
            <person name="Kravitz S."/>
            <person name="Kulp D."/>
            <person name="Lai Z."/>
            <person name="Lasko P."/>
            <person name="Lei Y."/>
            <person name="Levitsky A.A."/>
            <person name="Li J.H."/>
            <person name="Li Z."/>
            <person name="Liang Y."/>
            <person name="Lin X."/>
            <person name="Liu X."/>
            <person name="Mattei B."/>
            <person name="McIntosh T.C."/>
            <person name="McLeod M.P."/>
            <person name="McPherson D."/>
            <person name="Merkulov G."/>
            <person name="Milshina N.V."/>
            <person name="Mobarry C."/>
            <person name="Morris J."/>
            <person name="Moshrefi A."/>
            <person name="Mount S.M."/>
            <person name="Moy M."/>
            <person name="Murphy B."/>
            <person name="Murphy L."/>
            <person name="Muzny D.M."/>
            <person name="Nelson D.L."/>
            <person name="Nelson D.R."/>
            <person name="Nelson K.A."/>
            <person name="Nixon K."/>
            <person name="Nusskern D.R."/>
            <person name="Pacleb J.M."/>
            <person name="Palazzolo M."/>
            <person name="Pittman G.S."/>
            <person name="Pan S."/>
            <person name="Pollard J."/>
            <person name="Puri V."/>
            <person name="Reese M.G."/>
            <person name="Reinert K."/>
            <person name="Remington K."/>
            <person name="Saunders R.D.C."/>
            <person name="Scheeler F."/>
            <person name="Shen H."/>
            <person name="Shue B.C."/>
            <person name="Siden-Kiamos I."/>
            <person name="Simpson M."/>
            <person name="Skupski M.P."/>
            <person name="Smith T.J."/>
            <person name="Spier E."/>
            <person name="Spradling A.C."/>
            <person name="Stapleton M."/>
            <person name="Strong R."/>
            <person name="Sun E."/>
            <person name="Svirskas R."/>
            <person name="Tector C."/>
            <person name="Turner R."/>
            <person name="Venter E."/>
            <person name="Wang A.H."/>
            <person name="Wang X."/>
            <person name="Wang Z.-Y."/>
            <person name="Wassarman D.A."/>
            <person name="Weinstock G.M."/>
            <person name="Weissenbach J."/>
            <person name="Williams S.M."/>
            <person name="Woodage T."/>
            <person name="Worley K.C."/>
            <person name="Wu D."/>
            <person name="Yang S."/>
            <person name="Yao Q.A."/>
            <person name="Ye J."/>
            <person name="Yeh R.-F."/>
            <person name="Zaveri J.S."/>
            <person name="Zhan M."/>
            <person name="Zhang G."/>
            <person name="Zhao Q."/>
            <person name="Zheng L."/>
            <person name="Zheng X.H."/>
            <person name="Zhong F.N."/>
            <person name="Zhong W."/>
            <person name="Zhou X."/>
            <person name="Zhu S.C."/>
            <person name="Zhu X."/>
            <person name="Smith H.O."/>
            <person name="Gibbs R.A."/>
            <person name="Myers E.W."/>
            <person name="Rubin G.M."/>
            <person name="Venter J.C."/>
        </authorList>
    </citation>
    <scope>NUCLEOTIDE SEQUENCE [LARGE SCALE GENOMIC DNA]</scope>
    <source>
        <strain>Berkeley</strain>
    </source>
</reference>
<reference key="4">
    <citation type="journal article" date="2002" name="Genome Biol.">
        <title>Annotation of the Drosophila melanogaster euchromatic genome: a systematic review.</title>
        <authorList>
            <person name="Misra S."/>
            <person name="Crosby M.A."/>
            <person name="Mungall C.J."/>
            <person name="Matthews B.B."/>
            <person name="Campbell K.S."/>
            <person name="Hradecky P."/>
            <person name="Huang Y."/>
            <person name="Kaminker J.S."/>
            <person name="Millburn G.H."/>
            <person name="Prochnik S.E."/>
            <person name="Smith C.D."/>
            <person name="Tupy J.L."/>
            <person name="Whitfield E.J."/>
            <person name="Bayraktaroglu L."/>
            <person name="Berman B.P."/>
            <person name="Bettencourt B.R."/>
            <person name="Celniker S.E."/>
            <person name="de Grey A.D.N.J."/>
            <person name="Drysdale R.A."/>
            <person name="Harris N.L."/>
            <person name="Richter J."/>
            <person name="Russo S."/>
            <person name="Schroeder A.J."/>
            <person name="Shu S.Q."/>
            <person name="Stapleton M."/>
            <person name="Yamada C."/>
            <person name="Ashburner M."/>
            <person name="Gelbart W.M."/>
            <person name="Rubin G.M."/>
            <person name="Lewis S.E."/>
        </authorList>
    </citation>
    <scope>GENOME REANNOTATION</scope>
    <source>
        <strain>Berkeley</strain>
    </source>
</reference>
<reference evidence="16 19" key="5">
    <citation type="submission" date="2001-12" db="EMBL/GenBank/DDBJ databases">
        <authorList>
            <person name="Stapleton M."/>
            <person name="Brokstein P."/>
            <person name="Hong L."/>
            <person name="Agbayani A."/>
            <person name="Carlson J."/>
            <person name="Champe M."/>
            <person name="Chavez C."/>
            <person name="Dorsett V."/>
            <person name="Farfan D."/>
            <person name="Frise E."/>
            <person name="George R."/>
            <person name="Gonzalez M."/>
            <person name="Guarin H."/>
            <person name="Li P."/>
            <person name="Liao G."/>
            <person name="Miranda A."/>
            <person name="Mungall C.J."/>
            <person name="Nunoo J."/>
            <person name="Pacleb J."/>
            <person name="Paragas V."/>
            <person name="Park S."/>
            <person name="Phouanenavong S."/>
            <person name="Wan K."/>
            <person name="Yu C."/>
            <person name="Lewis S.E."/>
            <person name="Rubin G.M."/>
            <person name="Celniker S."/>
        </authorList>
    </citation>
    <scope>NUCLEOTIDE SEQUENCE [LARGE SCALE MRNA]</scope>
    <source>
        <strain evidence="19">Berkeley</strain>
        <tissue>Head</tissue>
    </source>
</reference>
<reference evidence="16" key="6">
    <citation type="journal article" date="2001" name="Development">
        <title>Drosophila E2f2 promotes the conversion from genomic DNA replication to gene amplification in ovarian follicle cells.</title>
        <authorList>
            <person name="Cayirlioglu P."/>
            <person name="Bonnette P.C."/>
            <person name="Dickson M.R."/>
            <person name="Duronio R.J."/>
        </authorList>
    </citation>
    <scope>FUNCTION</scope>
    <scope>SUBUNIT</scope>
    <scope>DEVELOPMENTAL STAGE</scope>
    <scope>DISRUPTION PHENOTYPE</scope>
</reference>
<reference evidence="16" key="7">
    <citation type="journal article" date="2001" name="Genes Dev.">
        <title>Functional antagonism between E2F family members.</title>
        <authorList>
            <person name="Frolov M.V."/>
            <person name="Huen D.S."/>
            <person name="Stevaux O."/>
            <person name="Dimova D."/>
            <person name="Balczarek-Strang K."/>
            <person name="Elsdon M."/>
            <person name="Dyson N.J."/>
        </authorList>
    </citation>
    <scope>FUNCTION</scope>
    <scope>HETERODIMER WITH DP</scope>
    <scope>INTERACTION WITH RBF</scope>
    <scope>TISSUE SPECIFICITY</scope>
    <scope>DISRUPTION PHENOTYPE</scope>
</reference>
<reference evidence="16" key="8">
    <citation type="journal article" date="2002" name="EMBO J.">
        <title>Distinct mechanisms of E2F regulation by Drosophila RBF1 and RBF2.</title>
        <authorList>
            <person name="Stevaux O."/>
            <person name="Dimova D."/>
            <person name="Frolov M.V."/>
            <person name="Taylor-Harding B."/>
            <person name="Morris E."/>
            <person name="Dyson N."/>
        </authorList>
    </citation>
    <scope>FUNCTION</scope>
    <scope>INTERACTION WITH RBF AND RBF2</scope>
</reference>
<reference evidence="16" key="9">
    <citation type="journal article" date="2003" name="Mol. Cell. Biol.">
        <title>Transcriptional repressor functions of Drosophila E2F1 and E2F2 cooperate to inhibit genomic DNA synthesis in ovarian follicle cells.</title>
        <authorList>
            <person name="Cayirlioglu P."/>
            <person name="Ward W.O."/>
            <person name="Silver Key S.C."/>
            <person name="Duronio R.J."/>
        </authorList>
    </citation>
    <scope>FUNCTION</scope>
    <scope>DISRUPTION PHENOTYPE</scope>
</reference>
<reference evidence="16" key="10">
    <citation type="journal article" date="2004" name="Cell">
        <title>Native E2F/RBF complexes contain Myb-interacting proteins and repress transcription of developmentally controlled E2F target genes.</title>
        <authorList>
            <person name="Korenjak M."/>
            <person name="Taylor-Harding B."/>
            <person name="Binne U.K."/>
            <person name="Satterlee J.S."/>
            <person name="Stevaux O."/>
            <person name="Aasland R."/>
            <person name="White-Cooper H."/>
            <person name="Dyson N."/>
            <person name="Brehm A."/>
        </authorList>
    </citation>
    <scope>FUNCTION</scope>
    <scope>IDENTIFICATION IN THE DREAM COMPLEX</scope>
</reference>
<reference evidence="16" key="11">
    <citation type="journal article" date="2004" name="Genes Dev.">
        <title>Identification of a Drosophila Myb-E2F2/RBF transcriptional repressor complex.</title>
        <authorList>
            <person name="Lewis P.W."/>
            <person name="Beall E.L."/>
            <person name="Fleischer T.C."/>
            <person name="Georlette D."/>
            <person name="Link A.J."/>
            <person name="Botchan M.R."/>
        </authorList>
    </citation>
    <scope>IDENTIFICATION IN THE DREAM COMPLEX</scope>
</reference>
<reference evidence="16" key="12">
    <citation type="journal article" date="2004" name="Mol. Cell. Biol.">
        <title>p55, the Drosophila ortholog of RbAp46/RbAp48, is required for the repression of dE2F2/RBF-regulated genes.</title>
        <authorList>
            <person name="Taylor-Harding B."/>
            <person name="Binne U.K."/>
            <person name="Korenjak M."/>
            <person name="Brehm A."/>
            <person name="Dyson N.J."/>
        </authorList>
    </citation>
    <scope>FUNCTION</scope>
</reference>
<reference evidence="16" key="13">
    <citation type="journal article" date="2010" name="Dev. Biol.">
        <title>E2F1 and E2F2 have opposite effects on radiation-induced p53-independent apoptosis in Drosophila.</title>
        <authorList>
            <person name="Wichmann A."/>
            <person name="Uyetake L."/>
            <person name="Su T.T."/>
        </authorList>
    </citation>
    <scope>FUNCTION</scope>
    <scope>DISRUPTION PHENOTYPE</scope>
</reference>
<reference evidence="16" key="14">
    <citation type="journal article" date="2010" name="J. Cell Biol.">
        <title>A robust cell cycle control mechanism limits E2F-induced proliferation of terminally differentiated cells in vivo.</title>
        <authorList>
            <person name="Buttitta L.A."/>
            <person name="Katzaroff A.J."/>
            <person name="Edgar B.A."/>
        </authorList>
    </citation>
    <scope>FUNCTION</scope>
</reference>
<reference evidence="16" key="15">
    <citation type="journal article" date="2012" name="Mol. Cell. Biol.">
        <title>A dual role for the dREAM/MMB complex in the regulation of differentiation-specific E2F/RB target genes.</title>
        <authorList>
            <person name="Lee H."/>
            <person name="Ragusano L."/>
            <person name="Martinez A."/>
            <person name="Gill J."/>
            <person name="Dimova D.K."/>
        </authorList>
    </citation>
    <scope>FUNCTION</scope>
</reference>
<protein>
    <recommendedName>
        <fullName>Transcription factor E2F2</fullName>
        <shortName evidence="15">dE2F2</shortName>
    </recommendedName>
    <alternativeName>
        <fullName evidence="18">E2F transcription factor 2</fullName>
    </alternativeName>
    <alternativeName>
        <fullName>E2F-like transcription factor E2F2</fullName>
    </alternativeName>
</protein>
<gene>
    <name type="primary">E2f2</name>
    <name type="ORF">CG1071</name>
</gene>
<accession>O77051</accession>
<organism>
    <name type="scientific">Drosophila melanogaster</name>
    <name type="common">Fruit fly</name>
    <dbReference type="NCBI Taxonomy" id="7227"/>
    <lineage>
        <taxon>Eukaryota</taxon>
        <taxon>Metazoa</taxon>
        <taxon>Ecdysozoa</taxon>
        <taxon>Arthropoda</taxon>
        <taxon>Hexapoda</taxon>
        <taxon>Insecta</taxon>
        <taxon>Pterygota</taxon>
        <taxon>Neoptera</taxon>
        <taxon>Endopterygota</taxon>
        <taxon>Diptera</taxon>
        <taxon>Brachycera</taxon>
        <taxon>Muscomorpha</taxon>
        <taxon>Ephydroidea</taxon>
        <taxon>Drosophilidae</taxon>
        <taxon>Drosophila</taxon>
        <taxon>Sophophora</taxon>
    </lineage>
</organism>